<evidence type="ECO:0000255" key="1">
    <source>
        <dbReference type="HAMAP-Rule" id="MF_01154"/>
    </source>
</evidence>
<reference key="1">
    <citation type="journal article" date="2009" name="J. Bacteriol.">
        <title>Genomic sequencing reveals regulatory mutations and recombinational events in the widely used MC4100 lineage of Escherichia coli K-12.</title>
        <authorList>
            <person name="Ferenci T."/>
            <person name="Zhou Z."/>
            <person name="Betteridge T."/>
            <person name="Ren Y."/>
            <person name="Liu Y."/>
            <person name="Feng L."/>
            <person name="Reeves P.R."/>
            <person name="Wang L."/>
        </authorList>
    </citation>
    <scope>NUCLEOTIDE SEQUENCE [LARGE SCALE GENOMIC DNA]</scope>
    <source>
        <strain>K12 / MC4100 / BW2952</strain>
    </source>
</reference>
<comment type="function">
    <text evidence="1">DNA-binding protein that preferentially recognizes a curved DNA sequence. It is probably a functional analog of DnaJ; displays overlapping activities with DnaJ, but functions under different conditions, probably acting as a molecular chaperone in an adaptive response to environmental stresses other than heat shock. Lacks autonomous chaperone activity; binds native substrates and targets them for recognition by DnaK. Its activity is inhibited by the binding of CbpM.</text>
</comment>
<comment type="subcellular location">
    <subcellularLocation>
        <location evidence="1">Cytoplasm</location>
        <location evidence="1">Nucleoid</location>
    </subcellularLocation>
</comment>
<organism>
    <name type="scientific">Escherichia coli (strain K12 / MC4100 / BW2952)</name>
    <dbReference type="NCBI Taxonomy" id="595496"/>
    <lineage>
        <taxon>Bacteria</taxon>
        <taxon>Pseudomonadati</taxon>
        <taxon>Pseudomonadota</taxon>
        <taxon>Gammaproteobacteria</taxon>
        <taxon>Enterobacterales</taxon>
        <taxon>Enterobacteriaceae</taxon>
        <taxon>Escherichia</taxon>
    </lineage>
</organism>
<dbReference type="EMBL" id="CP001396">
    <property type="protein sequence ID" value="ACR62684.1"/>
    <property type="molecule type" value="Genomic_DNA"/>
</dbReference>
<dbReference type="RefSeq" id="WP_000420621.1">
    <property type="nucleotide sequence ID" value="NC_012759.1"/>
</dbReference>
<dbReference type="SMR" id="C4ZQC8"/>
<dbReference type="GeneID" id="86863513"/>
<dbReference type="KEGG" id="ebw:BWG_0854"/>
<dbReference type="HOGENOM" id="CLU_017633_0_0_6"/>
<dbReference type="GO" id="GO:0005737">
    <property type="term" value="C:cytoplasm"/>
    <property type="evidence" value="ECO:0007669"/>
    <property type="project" value="UniProtKB-UniRule"/>
</dbReference>
<dbReference type="GO" id="GO:0009295">
    <property type="term" value="C:nucleoid"/>
    <property type="evidence" value="ECO:0007669"/>
    <property type="project" value="UniProtKB-SubCell"/>
</dbReference>
<dbReference type="GO" id="GO:0003681">
    <property type="term" value="F:bent DNA binding"/>
    <property type="evidence" value="ECO:0007669"/>
    <property type="project" value="UniProtKB-UniRule"/>
</dbReference>
<dbReference type="GO" id="GO:0051082">
    <property type="term" value="F:unfolded protein binding"/>
    <property type="evidence" value="ECO:0007669"/>
    <property type="project" value="InterPro"/>
</dbReference>
<dbReference type="GO" id="GO:0051085">
    <property type="term" value="P:chaperone cofactor-dependent protein refolding"/>
    <property type="evidence" value="ECO:0007669"/>
    <property type="project" value="TreeGrafter"/>
</dbReference>
<dbReference type="GO" id="GO:0042026">
    <property type="term" value="P:protein refolding"/>
    <property type="evidence" value="ECO:0007669"/>
    <property type="project" value="TreeGrafter"/>
</dbReference>
<dbReference type="CDD" id="cd06257">
    <property type="entry name" value="DnaJ"/>
    <property type="match status" value="1"/>
</dbReference>
<dbReference type="CDD" id="cd10747">
    <property type="entry name" value="DnaJ_C"/>
    <property type="match status" value="1"/>
</dbReference>
<dbReference type="FunFam" id="1.10.287.110:FF:000013">
    <property type="entry name" value="Curved DNA-binding protein"/>
    <property type="match status" value="1"/>
</dbReference>
<dbReference type="FunFam" id="2.60.260.20:FF:000008">
    <property type="entry name" value="Curved DNA-binding protein"/>
    <property type="match status" value="1"/>
</dbReference>
<dbReference type="FunFam" id="2.60.260.20:FF:000010">
    <property type="entry name" value="Curved DNA-binding protein"/>
    <property type="match status" value="1"/>
</dbReference>
<dbReference type="Gene3D" id="1.10.287.110">
    <property type="entry name" value="DnaJ domain"/>
    <property type="match status" value="1"/>
</dbReference>
<dbReference type="Gene3D" id="1.20.5.460">
    <property type="entry name" value="Single helix bin"/>
    <property type="match status" value="1"/>
</dbReference>
<dbReference type="Gene3D" id="2.60.260.20">
    <property type="entry name" value="Urease metallochaperone UreE, N-terminal domain"/>
    <property type="match status" value="2"/>
</dbReference>
<dbReference type="HAMAP" id="MF_01154">
    <property type="entry name" value="CbpA"/>
    <property type="match status" value="1"/>
</dbReference>
<dbReference type="InterPro" id="IPR023859">
    <property type="entry name" value="DNA-bd_curved-DNA"/>
</dbReference>
<dbReference type="InterPro" id="IPR002939">
    <property type="entry name" value="DnaJ_C"/>
</dbReference>
<dbReference type="InterPro" id="IPR001623">
    <property type="entry name" value="DnaJ_domain"/>
</dbReference>
<dbReference type="InterPro" id="IPR018253">
    <property type="entry name" value="DnaJ_domain_CS"/>
</dbReference>
<dbReference type="InterPro" id="IPR008971">
    <property type="entry name" value="HSP40/DnaJ_pept-bd"/>
</dbReference>
<dbReference type="InterPro" id="IPR036869">
    <property type="entry name" value="J_dom_sf"/>
</dbReference>
<dbReference type="NCBIfam" id="NF007618">
    <property type="entry name" value="PRK10266.1"/>
    <property type="match status" value="1"/>
</dbReference>
<dbReference type="PANTHER" id="PTHR43096">
    <property type="entry name" value="DNAJ HOMOLOG 1, MITOCHONDRIAL-RELATED"/>
    <property type="match status" value="1"/>
</dbReference>
<dbReference type="PANTHER" id="PTHR43096:SF52">
    <property type="entry name" value="DNAJ HOMOLOG 1, MITOCHONDRIAL-RELATED"/>
    <property type="match status" value="1"/>
</dbReference>
<dbReference type="Pfam" id="PF00226">
    <property type="entry name" value="DnaJ"/>
    <property type="match status" value="1"/>
</dbReference>
<dbReference type="Pfam" id="PF01556">
    <property type="entry name" value="DnaJ_C"/>
    <property type="match status" value="1"/>
</dbReference>
<dbReference type="PRINTS" id="PR00625">
    <property type="entry name" value="JDOMAIN"/>
</dbReference>
<dbReference type="SMART" id="SM00271">
    <property type="entry name" value="DnaJ"/>
    <property type="match status" value="1"/>
</dbReference>
<dbReference type="SUPFAM" id="SSF46565">
    <property type="entry name" value="Chaperone J-domain"/>
    <property type="match status" value="1"/>
</dbReference>
<dbReference type="SUPFAM" id="SSF49493">
    <property type="entry name" value="HSP40/DnaJ peptide-binding domain"/>
    <property type="match status" value="2"/>
</dbReference>
<dbReference type="PROSITE" id="PS00636">
    <property type="entry name" value="DNAJ_1"/>
    <property type="match status" value="1"/>
</dbReference>
<dbReference type="PROSITE" id="PS50076">
    <property type="entry name" value="DNAJ_2"/>
    <property type="match status" value="1"/>
</dbReference>
<protein>
    <recommendedName>
        <fullName evidence="1">Curved DNA-binding protein</fullName>
    </recommendedName>
</protein>
<accession>C4ZQC8</accession>
<proteinExistence type="inferred from homology"/>
<feature type="chain" id="PRO_1000213694" description="Curved DNA-binding protein">
    <location>
        <begin position="1"/>
        <end position="306"/>
    </location>
</feature>
<feature type="domain" description="J" evidence="1">
    <location>
        <begin position="5"/>
        <end position="69"/>
    </location>
</feature>
<gene>
    <name evidence="1" type="primary">cbpA</name>
    <name type="ordered locus">BWG_0854</name>
</gene>
<sequence length="306" mass="34455">MELKDYYAIMGVKPTDDLKTIKTAYRRLARKYHPDVSKEPDAEARFKEVAEAWEVLSDEQRRAEYDQMWQHRNDPQFNRQFHHGDGQSFNAEDFDDIFSSIFGQHARQSRQRPATRGHDIEIEVAVFLEETLTEHKRTISYNLPVYNAFGMIEQEIPKTLNVKIPAGVGNGQRIRLKGQGTPGENGGPNGDLWLVIHIAPHPLFDIVGQDLEIVVPVSPWEAALGAKVTVPTLKESILLTIPPGSQAGQRLRVKGKGLVSKKQTGDLYAVLKIVMPPKPDENTAALWQQLADAQSSFDPRKDWGKA</sequence>
<name>CBPA_ECOBW</name>
<keyword id="KW-0143">Chaperone</keyword>
<keyword id="KW-0963">Cytoplasm</keyword>
<keyword id="KW-0238">DNA-binding</keyword>